<dbReference type="EMBL" id="L43367">
    <property type="protein sequence ID" value="AAA69560.1"/>
    <property type="molecule type" value="Genomic_DNA"/>
</dbReference>
<dbReference type="RefSeq" id="WP_003037086.1">
    <property type="nucleotide sequence ID" value="NZ_VJMD01000038.1"/>
</dbReference>
<dbReference type="SMR" id="P48204"/>
<dbReference type="GeneID" id="75264983"/>
<dbReference type="PATRIC" id="fig|263.100.peg.873"/>
<dbReference type="OMA" id="PHRHQAI"/>
<dbReference type="GO" id="GO:0005829">
    <property type="term" value="C:cytosol"/>
    <property type="evidence" value="ECO:0007669"/>
    <property type="project" value="TreeGrafter"/>
</dbReference>
<dbReference type="GO" id="GO:0000774">
    <property type="term" value="F:adenyl-nucleotide exchange factor activity"/>
    <property type="evidence" value="ECO:0007669"/>
    <property type="project" value="InterPro"/>
</dbReference>
<dbReference type="GO" id="GO:0042803">
    <property type="term" value="F:protein homodimerization activity"/>
    <property type="evidence" value="ECO:0007669"/>
    <property type="project" value="InterPro"/>
</dbReference>
<dbReference type="GO" id="GO:0051087">
    <property type="term" value="F:protein-folding chaperone binding"/>
    <property type="evidence" value="ECO:0007669"/>
    <property type="project" value="InterPro"/>
</dbReference>
<dbReference type="GO" id="GO:0051082">
    <property type="term" value="F:unfolded protein binding"/>
    <property type="evidence" value="ECO:0007669"/>
    <property type="project" value="TreeGrafter"/>
</dbReference>
<dbReference type="GO" id="GO:0006457">
    <property type="term" value="P:protein folding"/>
    <property type="evidence" value="ECO:0007669"/>
    <property type="project" value="InterPro"/>
</dbReference>
<dbReference type="CDD" id="cd00446">
    <property type="entry name" value="GrpE"/>
    <property type="match status" value="1"/>
</dbReference>
<dbReference type="FunFam" id="2.30.22.10:FF:000001">
    <property type="entry name" value="Protein GrpE"/>
    <property type="match status" value="1"/>
</dbReference>
<dbReference type="Gene3D" id="3.90.20.20">
    <property type="match status" value="1"/>
</dbReference>
<dbReference type="Gene3D" id="2.30.22.10">
    <property type="entry name" value="Head domain of nucleotide exchange factor GrpE"/>
    <property type="match status" value="1"/>
</dbReference>
<dbReference type="HAMAP" id="MF_01151">
    <property type="entry name" value="GrpE"/>
    <property type="match status" value="1"/>
</dbReference>
<dbReference type="InterPro" id="IPR000740">
    <property type="entry name" value="GrpE"/>
</dbReference>
<dbReference type="InterPro" id="IPR013805">
    <property type="entry name" value="GrpE_coiled_coil"/>
</dbReference>
<dbReference type="InterPro" id="IPR009012">
    <property type="entry name" value="GrpE_head"/>
</dbReference>
<dbReference type="NCBIfam" id="NF010737">
    <property type="entry name" value="PRK14139.1"/>
    <property type="match status" value="1"/>
</dbReference>
<dbReference type="NCBIfam" id="NF010738">
    <property type="entry name" value="PRK14140.1"/>
    <property type="match status" value="1"/>
</dbReference>
<dbReference type="NCBIfam" id="NF010746">
    <property type="entry name" value="PRK14148.1"/>
    <property type="match status" value="1"/>
</dbReference>
<dbReference type="NCBIfam" id="NF010748">
    <property type="entry name" value="PRK14150.1"/>
    <property type="match status" value="1"/>
</dbReference>
<dbReference type="PANTHER" id="PTHR21237">
    <property type="entry name" value="GRPE PROTEIN"/>
    <property type="match status" value="1"/>
</dbReference>
<dbReference type="PANTHER" id="PTHR21237:SF23">
    <property type="entry name" value="GRPE PROTEIN HOMOLOG, MITOCHONDRIAL"/>
    <property type="match status" value="1"/>
</dbReference>
<dbReference type="Pfam" id="PF01025">
    <property type="entry name" value="GrpE"/>
    <property type="match status" value="1"/>
</dbReference>
<dbReference type="PRINTS" id="PR00773">
    <property type="entry name" value="GRPEPROTEIN"/>
</dbReference>
<dbReference type="SUPFAM" id="SSF58014">
    <property type="entry name" value="Coiled-coil domain of nucleotide exchange factor GrpE"/>
    <property type="match status" value="1"/>
</dbReference>
<dbReference type="SUPFAM" id="SSF51064">
    <property type="entry name" value="Head domain of nucleotide exchange factor GrpE"/>
    <property type="match status" value="1"/>
</dbReference>
<dbReference type="PROSITE" id="PS01071">
    <property type="entry name" value="GRPE"/>
    <property type="match status" value="1"/>
</dbReference>
<accession>P48204</accession>
<name>GRPE_FRATU</name>
<organism>
    <name type="scientific">Francisella tularensis</name>
    <dbReference type="NCBI Taxonomy" id="263"/>
    <lineage>
        <taxon>Bacteria</taxon>
        <taxon>Pseudomonadati</taxon>
        <taxon>Pseudomonadota</taxon>
        <taxon>Gammaproteobacteria</taxon>
        <taxon>Thiotrichales</taxon>
        <taxon>Francisellaceae</taxon>
        <taxon>Francisella</taxon>
    </lineage>
</organism>
<comment type="function">
    <text evidence="1">Participates actively in the response to hyperosmotic and heat shock by preventing the aggregation of stress-denatured proteins, in association with DnaK and GrpE. It is the nucleotide exchange factor for DnaK and may function as a thermosensor. Unfolded proteins bind initially to DnaJ; upon interaction with the DnaJ-bound protein, DnaK hydrolyzes its bound ATP, resulting in the formation of a stable complex. GrpE releases ADP from DnaK; ATP binding to DnaK triggers the release of the substrate protein, thus completing the reaction cycle. Several rounds of ATP-dependent interactions between DnaJ, DnaK and GrpE are required for fully efficient folding.</text>
</comment>
<comment type="subunit">
    <text evidence="1">Homodimer.</text>
</comment>
<comment type="subcellular location">
    <subcellularLocation>
        <location evidence="1">Cytoplasm</location>
    </subcellularLocation>
</comment>
<comment type="similarity">
    <text evidence="1">Belongs to the GrpE family.</text>
</comment>
<gene>
    <name evidence="1" type="primary">grpE</name>
</gene>
<reference key="1">
    <citation type="journal article" date="1995" name="Gene">
        <title>Analysis of the DnaK molecular chaperone system of Francisella tularensis.</title>
        <authorList>
            <person name="Zuber M."/>
            <person name="Hoover T.A."/>
            <person name="Dertzbaugh M.T."/>
            <person name="Court D.L."/>
        </authorList>
    </citation>
    <scope>NUCLEOTIDE SEQUENCE [GENOMIC DNA]</scope>
</reference>
<protein>
    <recommendedName>
        <fullName evidence="1">Protein GrpE</fullName>
    </recommendedName>
    <alternativeName>
        <fullName evidence="1">HSP-70 cofactor</fullName>
    </alternativeName>
</protein>
<feature type="chain" id="PRO_0000113787" description="Protein GrpE">
    <location>
        <begin position="1"/>
        <end position="195"/>
    </location>
</feature>
<keyword id="KW-0143">Chaperone</keyword>
<keyword id="KW-0963">Cytoplasm</keyword>
<keyword id="KW-0346">Stress response</keyword>
<proteinExistence type="inferred from homology"/>
<sequence length="195" mass="22036">MSKQEKSNVEDKSLDIETAAQVETAQESASGALEELSVEEQLERAKDTIKELEDSCDQFKDEALRAKAEMENIRKRAERDVSNARKFGIEKFAKELLPVIDSIEQALKHEVKLEEAIAMKEGIELTAKMLVDILKKNGVEELDPKGEKFDPNLHEAMAMIPNPEFEDNTIFDVFQKGYMLNGRIVRAAKVVIVKN</sequence>
<evidence type="ECO:0000255" key="1">
    <source>
        <dbReference type="HAMAP-Rule" id="MF_01151"/>
    </source>
</evidence>